<gene>
    <name evidence="1" type="primary">pqqB</name>
    <name type="ordered locus">Mnod_5991</name>
</gene>
<sequence length="299" mass="32015">MQAIILGSAAGGGVPQWNCRCPICAMAWAGDRRVLPRTQSSLAVSPDGERWLLVNASPDIRQQLLATPALHPRHGLRHTPIEAVLLTNGDVDHVAGLLTLRESQPFRLHATRNILESVSANRVFDVLAADLVARREVGLNETFEPVSGLAVTLFPVPGKVPLWLEEGTPEIGAETETTVGAMIEAGGRRLAYVPGCARVTEDLRHRLAGVDALLFDGTVLADDDMIRAGVGTKTGWRMGHVPMTGQGGSIAALAEVPIGRRIFVHINNTNPVLVENSEARRAVEAAGWDVGHDGMALRL</sequence>
<proteinExistence type="inferred from homology"/>
<name>PQQB_METNO</name>
<protein>
    <recommendedName>
        <fullName evidence="1">Coenzyme PQQ synthesis protein B</fullName>
    </recommendedName>
    <alternativeName>
        <fullName evidence="1">Pyrroloquinoline quinone biosynthesis protein B</fullName>
    </alternativeName>
</protein>
<organism>
    <name type="scientific">Methylobacterium nodulans (strain LMG 21967 / CNCM I-2342 / ORS 2060)</name>
    <dbReference type="NCBI Taxonomy" id="460265"/>
    <lineage>
        <taxon>Bacteria</taxon>
        <taxon>Pseudomonadati</taxon>
        <taxon>Pseudomonadota</taxon>
        <taxon>Alphaproteobacteria</taxon>
        <taxon>Hyphomicrobiales</taxon>
        <taxon>Methylobacteriaceae</taxon>
        <taxon>Methylobacterium</taxon>
    </lineage>
</organism>
<reference key="1">
    <citation type="submission" date="2009-01" db="EMBL/GenBank/DDBJ databases">
        <title>Complete sequence of chromosome of Methylobacterium nodulans ORS 2060.</title>
        <authorList>
            <consortium name="US DOE Joint Genome Institute"/>
            <person name="Lucas S."/>
            <person name="Copeland A."/>
            <person name="Lapidus A."/>
            <person name="Glavina del Rio T."/>
            <person name="Dalin E."/>
            <person name="Tice H."/>
            <person name="Bruce D."/>
            <person name="Goodwin L."/>
            <person name="Pitluck S."/>
            <person name="Sims D."/>
            <person name="Brettin T."/>
            <person name="Detter J.C."/>
            <person name="Han C."/>
            <person name="Larimer F."/>
            <person name="Land M."/>
            <person name="Hauser L."/>
            <person name="Kyrpides N."/>
            <person name="Ivanova N."/>
            <person name="Marx C.J."/>
            <person name="Richardson P."/>
        </authorList>
    </citation>
    <scope>NUCLEOTIDE SEQUENCE [LARGE SCALE GENOMIC DNA]</scope>
    <source>
        <strain>LMG 21967 / CNCM I-2342 / ORS 2060</strain>
    </source>
</reference>
<dbReference type="EMBL" id="CP001349">
    <property type="protein sequence ID" value="ACL60818.1"/>
    <property type="molecule type" value="Genomic_DNA"/>
</dbReference>
<dbReference type="RefSeq" id="WP_015932412.1">
    <property type="nucleotide sequence ID" value="NC_011894.1"/>
</dbReference>
<dbReference type="SMR" id="B8ITW0"/>
<dbReference type="STRING" id="460265.Mnod_5991"/>
<dbReference type="KEGG" id="mno:Mnod_5991"/>
<dbReference type="eggNOG" id="COG1235">
    <property type="taxonomic scope" value="Bacteria"/>
</dbReference>
<dbReference type="HOGENOM" id="CLU_061120_0_0_5"/>
<dbReference type="OrthoDB" id="9778305at2"/>
<dbReference type="UniPathway" id="UPA00539"/>
<dbReference type="Proteomes" id="UP000008207">
    <property type="component" value="Chromosome"/>
</dbReference>
<dbReference type="GO" id="GO:0018189">
    <property type="term" value="P:pyrroloquinoline quinone biosynthetic process"/>
    <property type="evidence" value="ECO:0007669"/>
    <property type="project" value="UniProtKB-UniRule"/>
</dbReference>
<dbReference type="CDD" id="cd16274">
    <property type="entry name" value="PQQB-like_MBL-fold"/>
    <property type="match status" value="1"/>
</dbReference>
<dbReference type="Gene3D" id="3.60.15.10">
    <property type="entry name" value="Ribonuclease Z/Hydroxyacylglutathione hydrolase-like"/>
    <property type="match status" value="1"/>
</dbReference>
<dbReference type="HAMAP" id="MF_00653">
    <property type="entry name" value="PQQ_syn_PqqB"/>
    <property type="match status" value="1"/>
</dbReference>
<dbReference type="InterPro" id="IPR001279">
    <property type="entry name" value="Metallo-B-lactamas"/>
</dbReference>
<dbReference type="InterPro" id="IPR011842">
    <property type="entry name" value="PQQ_synth_PqqB"/>
</dbReference>
<dbReference type="InterPro" id="IPR036866">
    <property type="entry name" value="RibonucZ/Hydroxyglut_hydro"/>
</dbReference>
<dbReference type="NCBIfam" id="TIGR02108">
    <property type="entry name" value="PQQ_syn_pqqB"/>
    <property type="match status" value="1"/>
</dbReference>
<dbReference type="PANTHER" id="PTHR42663:SF7">
    <property type="entry name" value="COENZYME PQQ SYNTHESIS PROTEIN B"/>
    <property type="match status" value="1"/>
</dbReference>
<dbReference type="PANTHER" id="PTHR42663">
    <property type="entry name" value="HYDROLASE C777.06C-RELATED-RELATED"/>
    <property type="match status" value="1"/>
</dbReference>
<dbReference type="Pfam" id="PF12706">
    <property type="entry name" value="Lactamase_B_2"/>
    <property type="match status" value="1"/>
</dbReference>
<dbReference type="SUPFAM" id="SSF56281">
    <property type="entry name" value="Metallo-hydrolase/oxidoreductase"/>
    <property type="match status" value="1"/>
</dbReference>
<evidence type="ECO:0000255" key="1">
    <source>
        <dbReference type="HAMAP-Rule" id="MF_00653"/>
    </source>
</evidence>
<comment type="function">
    <text evidence="1">May be involved in the transport of PQQ or its precursor to the periplasm.</text>
</comment>
<comment type="pathway">
    <text evidence="1">Cofactor biosynthesis; pyrroloquinoline quinone biosynthesis.</text>
</comment>
<comment type="similarity">
    <text evidence="1">Belongs to the PqqB family.</text>
</comment>
<feature type="chain" id="PRO_1000147520" description="Coenzyme PQQ synthesis protein B">
    <location>
        <begin position="1"/>
        <end position="299"/>
    </location>
</feature>
<keyword id="KW-0884">PQQ biosynthesis</keyword>
<keyword id="KW-1185">Reference proteome</keyword>
<keyword id="KW-0813">Transport</keyword>
<accession>B8ITW0</accession>